<protein>
    <recommendedName>
        <fullName evidence="1">Phosphoheptose isomerase</fullName>
        <ecNumber evidence="1">5.3.1.28</ecNumber>
    </recommendedName>
    <alternativeName>
        <fullName evidence="1">Sedoheptulose 7-phosphate isomerase</fullName>
    </alternativeName>
</protein>
<accession>A6Q4Z5</accession>
<reference key="1">
    <citation type="journal article" date="2007" name="Proc. Natl. Acad. Sci. U.S.A.">
        <title>Deep-sea vent epsilon-proteobacterial genomes provide insights into emergence of pathogens.</title>
        <authorList>
            <person name="Nakagawa S."/>
            <person name="Takaki Y."/>
            <person name="Shimamura S."/>
            <person name="Reysenbach A.-L."/>
            <person name="Takai K."/>
            <person name="Horikoshi K."/>
        </authorList>
    </citation>
    <scope>NUCLEOTIDE SEQUENCE [LARGE SCALE GENOMIC DNA]</scope>
    <source>
        <strain>SB155-2</strain>
    </source>
</reference>
<proteinExistence type="inferred from homology"/>
<feature type="chain" id="PRO_1000009084" description="Phosphoheptose isomerase">
    <location>
        <begin position="1"/>
        <end position="187"/>
    </location>
</feature>
<feature type="domain" description="SIS" evidence="1">
    <location>
        <begin position="34"/>
        <end position="187"/>
    </location>
</feature>
<feature type="binding site" evidence="1">
    <location>
        <begin position="49"/>
        <end position="51"/>
    </location>
    <ligand>
        <name>substrate</name>
    </ligand>
</feature>
<feature type="binding site" evidence="1">
    <location>
        <position position="58"/>
    </location>
    <ligand>
        <name>Zn(2+)</name>
        <dbReference type="ChEBI" id="CHEBI:29105"/>
    </ligand>
</feature>
<feature type="binding site" evidence="1">
    <location>
        <position position="62"/>
    </location>
    <ligand>
        <name>substrate</name>
    </ligand>
</feature>
<feature type="binding site" evidence="1">
    <location>
        <position position="62"/>
    </location>
    <ligand>
        <name>Zn(2+)</name>
        <dbReference type="ChEBI" id="CHEBI:29105"/>
    </ligand>
</feature>
<feature type="binding site" evidence="1">
    <location>
        <begin position="91"/>
        <end position="92"/>
    </location>
    <ligand>
        <name>substrate</name>
    </ligand>
</feature>
<feature type="binding site" evidence="1">
    <location>
        <begin position="117"/>
        <end position="119"/>
    </location>
    <ligand>
        <name>substrate</name>
    </ligand>
</feature>
<feature type="binding site" evidence="1">
    <location>
        <position position="122"/>
    </location>
    <ligand>
        <name>substrate</name>
    </ligand>
</feature>
<feature type="binding site" evidence="1">
    <location>
        <position position="169"/>
    </location>
    <ligand>
        <name>substrate</name>
    </ligand>
</feature>
<feature type="binding site" evidence="1">
    <location>
        <position position="169"/>
    </location>
    <ligand>
        <name>Zn(2+)</name>
        <dbReference type="ChEBI" id="CHEBI:29105"/>
    </ligand>
</feature>
<feature type="binding site" evidence="1">
    <location>
        <position position="177"/>
    </location>
    <ligand>
        <name>Zn(2+)</name>
        <dbReference type="ChEBI" id="CHEBI:29105"/>
    </ligand>
</feature>
<organism>
    <name type="scientific">Nitratiruptor sp. (strain SB155-2)</name>
    <dbReference type="NCBI Taxonomy" id="387092"/>
    <lineage>
        <taxon>Bacteria</taxon>
        <taxon>Pseudomonadati</taxon>
        <taxon>Campylobacterota</taxon>
        <taxon>Epsilonproteobacteria</taxon>
        <taxon>Nautiliales</taxon>
        <taxon>Nitratiruptoraceae</taxon>
        <taxon>Nitratiruptor</taxon>
    </lineage>
</organism>
<sequence>MLEHIEKELLEHQKTFEKVWEELRFHIYTASIICIEALKNQKKIMLCGNGGSAADAQHIAAELVGRFKKERRSLPAIALSVDTSALTAIGNDYGFELVFARQVEGLAQKGDVLIGISTSGESENVLRAMEEAKKRGCKTIGLLGKDGGRIKDLCDAAIVVPSSQTPRIQEMHIMIGHILCSLIDESF</sequence>
<gene>
    <name evidence="1" type="primary">gmhA</name>
    <name type="ordered locus">NIS_1447</name>
</gene>
<dbReference type="EC" id="5.3.1.28" evidence="1"/>
<dbReference type="EMBL" id="AP009178">
    <property type="protein sequence ID" value="BAF70554.1"/>
    <property type="molecule type" value="Genomic_DNA"/>
</dbReference>
<dbReference type="RefSeq" id="WP_012082817.1">
    <property type="nucleotide sequence ID" value="NC_009662.1"/>
</dbReference>
<dbReference type="SMR" id="A6Q4Z5"/>
<dbReference type="FunCoup" id="A6Q4Z5">
    <property type="interactions" value="135"/>
</dbReference>
<dbReference type="STRING" id="387092.NIS_1447"/>
<dbReference type="KEGG" id="nis:NIS_1447"/>
<dbReference type="eggNOG" id="COG0279">
    <property type="taxonomic scope" value="Bacteria"/>
</dbReference>
<dbReference type="HOGENOM" id="CLU_080999_4_0_7"/>
<dbReference type="InParanoid" id="A6Q4Z5"/>
<dbReference type="OrthoDB" id="9810929at2"/>
<dbReference type="UniPathway" id="UPA00041">
    <property type="reaction ID" value="UER00436"/>
</dbReference>
<dbReference type="Proteomes" id="UP000001118">
    <property type="component" value="Chromosome"/>
</dbReference>
<dbReference type="GO" id="GO:0005737">
    <property type="term" value="C:cytoplasm"/>
    <property type="evidence" value="ECO:0007669"/>
    <property type="project" value="UniProtKB-SubCell"/>
</dbReference>
<dbReference type="GO" id="GO:0097367">
    <property type="term" value="F:carbohydrate derivative binding"/>
    <property type="evidence" value="ECO:0007669"/>
    <property type="project" value="InterPro"/>
</dbReference>
<dbReference type="GO" id="GO:0008968">
    <property type="term" value="F:D-sedoheptulose 7-phosphate isomerase activity"/>
    <property type="evidence" value="ECO:0007669"/>
    <property type="project" value="UniProtKB-UniRule"/>
</dbReference>
<dbReference type="GO" id="GO:0008270">
    <property type="term" value="F:zinc ion binding"/>
    <property type="evidence" value="ECO:0007669"/>
    <property type="project" value="UniProtKB-UniRule"/>
</dbReference>
<dbReference type="GO" id="GO:0005975">
    <property type="term" value="P:carbohydrate metabolic process"/>
    <property type="evidence" value="ECO:0007669"/>
    <property type="project" value="UniProtKB-UniRule"/>
</dbReference>
<dbReference type="GO" id="GO:2001061">
    <property type="term" value="P:D-glycero-D-manno-heptose 7-phosphate biosynthetic process"/>
    <property type="evidence" value="ECO:0007669"/>
    <property type="project" value="UniProtKB-UniPathway"/>
</dbReference>
<dbReference type="CDD" id="cd05006">
    <property type="entry name" value="SIS_GmhA"/>
    <property type="match status" value="1"/>
</dbReference>
<dbReference type="Gene3D" id="3.40.50.10490">
    <property type="entry name" value="Glucose-6-phosphate isomerase like protein, domain 1"/>
    <property type="match status" value="1"/>
</dbReference>
<dbReference type="HAMAP" id="MF_00067">
    <property type="entry name" value="GmhA"/>
    <property type="match status" value="1"/>
</dbReference>
<dbReference type="InterPro" id="IPR035461">
    <property type="entry name" value="GmhA/DiaA"/>
</dbReference>
<dbReference type="InterPro" id="IPR004515">
    <property type="entry name" value="Phosphoheptose_Isoase"/>
</dbReference>
<dbReference type="InterPro" id="IPR001347">
    <property type="entry name" value="SIS_dom"/>
</dbReference>
<dbReference type="InterPro" id="IPR046348">
    <property type="entry name" value="SIS_dom_sf"/>
</dbReference>
<dbReference type="InterPro" id="IPR050099">
    <property type="entry name" value="SIS_GmhA/DiaA_subfam"/>
</dbReference>
<dbReference type="NCBIfam" id="TIGR00441">
    <property type="entry name" value="gmhA"/>
    <property type="match status" value="1"/>
</dbReference>
<dbReference type="PANTHER" id="PTHR30390:SF6">
    <property type="entry name" value="DNAA INITIATOR-ASSOCIATING PROTEIN DIAA"/>
    <property type="match status" value="1"/>
</dbReference>
<dbReference type="PANTHER" id="PTHR30390">
    <property type="entry name" value="SEDOHEPTULOSE 7-PHOSPHATE ISOMERASE / DNAA INITIATOR-ASSOCIATING FACTOR FOR REPLICATION INITIATION"/>
    <property type="match status" value="1"/>
</dbReference>
<dbReference type="Pfam" id="PF13580">
    <property type="entry name" value="SIS_2"/>
    <property type="match status" value="1"/>
</dbReference>
<dbReference type="SUPFAM" id="SSF53697">
    <property type="entry name" value="SIS domain"/>
    <property type="match status" value="1"/>
</dbReference>
<dbReference type="PROSITE" id="PS51464">
    <property type="entry name" value="SIS"/>
    <property type="match status" value="1"/>
</dbReference>
<name>GMHA_NITSB</name>
<keyword id="KW-0119">Carbohydrate metabolism</keyword>
<keyword id="KW-0963">Cytoplasm</keyword>
<keyword id="KW-0413">Isomerase</keyword>
<keyword id="KW-0479">Metal-binding</keyword>
<keyword id="KW-1185">Reference proteome</keyword>
<keyword id="KW-0862">Zinc</keyword>
<comment type="function">
    <text evidence="1">Catalyzes the isomerization of sedoheptulose 7-phosphate in D-glycero-D-manno-heptose 7-phosphate.</text>
</comment>
<comment type="catalytic activity">
    <reaction evidence="1">
        <text>2 D-sedoheptulose 7-phosphate = D-glycero-alpha-D-manno-heptose 7-phosphate + D-glycero-beta-D-manno-heptose 7-phosphate</text>
        <dbReference type="Rhea" id="RHEA:27489"/>
        <dbReference type="ChEBI" id="CHEBI:57483"/>
        <dbReference type="ChEBI" id="CHEBI:60203"/>
        <dbReference type="ChEBI" id="CHEBI:60204"/>
        <dbReference type="EC" id="5.3.1.28"/>
    </reaction>
</comment>
<comment type="cofactor">
    <cofactor evidence="1">
        <name>Zn(2+)</name>
        <dbReference type="ChEBI" id="CHEBI:29105"/>
    </cofactor>
    <text evidence="1">Binds 1 zinc ion per subunit.</text>
</comment>
<comment type="pathway">
    <text evidence="1">Carbohydrate biosynthesis; D-glycero-D-manno-heptose 7-phosphate biosynthesis; D-glycero-alpha-D-manno-heptose 7-phosphate and D-glycero-beta-D-manno-heptose 7-phosphate from sedoheptulose 7-phosphate: step 1/1.</text>
</comment>
<comment type="subunit">
    <text evidence="1">Homotetramer.</text>
</comment>
<comment type="subcellular location">
    <subcellularLocation>
        <location evidence="1">Cytoplasm</location>
    </subcellularLocation>
</comment>
<comment type="miscellaneous">
    <text evidence="1">The reaction produces a racemic mixture of D-glycero-alpha-D-manno-heptose 7-phosphate and D-glycero-beta-D-manno-heptose 7-phosphate.</text>
</comment>
<comment type="similarity">
    <text evidence="1">Belongs to the SIS family. GmhA subfamily.</text>
</comment>
<evidence type="ECO:0000255" key="1">
    <source>
        <dbReference type="HAMAP-Rule" id="MF_00067"/>
    </source>
</evidence>